<sequence>GNCIELNNDCDGSKDDCQCCRDNAYCSCYNFFGIKSGCKCSVGNSGTGYSVCLKKLECPNRRAWTSWKKECTKPCIGKRC</sequence>
<proteinExistence type="evidence at protein level"/>
<protein>
    <recommendedName>
        <fullName>U20-ctenitoxin-Pn1a</fullName>
        <shortName>U20-CNTX-Pn1a</shortName>
    </recommendedName>
    <alternativeName>
        <fullName>Omega-phonetoxin PNTx22C5</fullName>
    </alternativeName>
</protein>
<feature type="chain" id="PRO_0000087612" description="U20-ctenitoxin-Pn1a">
    <location>
        <begin position="1"/>
        <end position="80" status="greater than"/>
    </location>
</feature>
<feature type="disulfide bond" evidence="5">
    <location>
        <begin position="3"/>
        <end position="20"/>
    </location>
</feature>
<feature type="disulfide bond" evidence="5">
    <location>
        <begin position="10"/>
        <end position="26"/>
    </location>
</feature>
<feature type="disulfide bond" evidence="5">
    <location>
        <begin position="17"/>
        <end position="52"/>
    </location>
</feature>
<feature type="disulfide bond" evidence="5">
    <location>
        <begin position="19"/>
        <end position="40"/>
    </location>
</feature>
<feature type="disulfide bond" evidence="5">
    <location>
        <begin position="28"/>
        <end position="38"/>
    </location>
</feature>
<feature type="disulfide bond" evidence="1">
    <location>
        <begin position="58"/>
        <end position="71"/>
    </location>
</feature>
<feature type="disulfide bond" evidence="1">
    <location>
        <begin position="75"/>
        <end position="80"/>
    </location>
</feature>
<feature type="non-terminal residue" evidence="4">
    <location>
        <position position="80"/>
    </location>
</feature>
<name>TOPC5_PHONI</name>
<keyword id="KW-0108">Calcium channel impairing toxin</keyword>
<keyword id="KW-0903">Direct protein sequencing</keyword>
<keyword id="KW-1015">Disulfide bond</keyword>
<keyword id="KW-0872">Ion channel impairing toxin</keyword>
<keyword id="KW-0960">Knottin</keyword>
<keyword id="KW-0528">Neurotoxin</keyword>
<keyword id="KW-0964">Secreted</keyword>
<keyword id="KW-0800">Toxin</keyword>
<keyword id="KW-1218">Voltage-gated calcium channel impairing toxin</keyword>
<comment type="function">
    <text evidence="3">Omega-agatoxin are antagonists of voltage-gated calcium channels (Cav). Induces rapid general flaccid paralysis followed by death when injected into the cerebral ventricle of mice at dose levels of 3 ug per mouse.</text>
</comment>
<comment type="subcellular location">
    <subcellularLocation>
        <location evidence="2">Secreted</location>
    </subcellularLocation>
</comment>
<comment type="tissue specificity">
    <text evidence="2">Expressed by the venom gland.</text>
</comment>
<comment type="domain">
    <text evidence="5">The presence of a 'disulfide through disulfide knot' structurally defines this protein as a knottin.</text>
</comment>
<comment type="mass spectrometry"/>
<comment type="similarity">
    <text evidence="5">Belongs to the neurotoxin 04 (omega-agtx) family. 03 (type II/III omega-agtx) subfamily.</text>
</comment>
<accession>P84093</accession>
<reference evidence="5" key="1">
    <citation type="journal article" date="2006" name="Comp. Biochem. Physiol.">
        <title>Comparison of the partial proteomes of the venoms of Brazilian spiders of the genus Phoneutria.</title>
        <authorList>
            <person name="Richardson M."/>
            <person name="Pimenta A.M."/>
            <person name="Bemquerer M.P."/>
            <person name="Santoro M.M."/>
            <person name="Beirao P.S."/>
            <person name="Lima M.E."/>
            <person name="Figueiredo S.G."/>
            <person name="Bloch C. Jr."/>
            <person name="Vasconcelos E.A."/>
            <person name="Campos F.A."/>
            <person name="Gomes P.C."/>
            <person name="Cordeiro M.N."/>
        </authorList>
    </citation>
    <scope>PROTEIN SEQUENCE</scope>
    <scope>SUBCELLULAR LOCATION</scope>
    <scope>TISSUE SPECIFICITY</scope>
    <scope>MASS SPECTROMETRY</scope>
    <source>
        <tissue evidence="2">Venom</tissue>
    </source>
</reference>
<reference evidence="5" key="2">
    <citation type="submission" date="2004-07" db="UniProtKB">
        <title>New lethal neurotoxin PNTx22C5 from venom of the Phoneutria nigriventer has sequence similarities with toxins PNTx1 and PNTx3-4 from the same spider and the omega agatoxins from Agelenopsis aperta.</title>
        <authorList>
            <person name="Richardson M."/>
            <person name="Pimenta A.M.C."/>
            <person name="Bemquerer M.P."/>
            <person name="Santoro M.M."/>
            <person name="Figueiredo S.G."/>
            <person name="Cordeiro M.N."/>
        </authorList>
    </citation>
    <scope>FUNCTION</scope>
</reference>
<organism>
    <name type="scientific">Phoneutria nigriventer</name>
    <name type="common">Brazilian armed spider</name>
    <name type="synonym">Ctenus nigriventer</name>
    <dbReference type="NCBI Taxonomy" id="6918"/>
    <lineage>
        <taxon>Eukaryota</taxon>
        <taxon>Metazoa</taxon>
        <taxon>Ecdysozoa</taxon>
        <taxon>Arthropoda</taxon>
        <taxon>Chelicerata</taxon>
        <taxon>Arachnida</taxon>
        <taxon>Araneae</taxon>
        <taxon>Araneomorphae</taxon>
        <taxon>Entelegynae</taxon>
        <taxon>Lycosoidea</taxon>
        <taxon>Ctenidae</taxon>
        <taxon>Phoneutria</taxon>
    </lineage>
</organism>
<dbReference type="SMR" id="P84093"/>
<dbReference type="ArachnoServer" id="AS000190">
    <property type="toxin name" value="U20-ctenitoxin-Pn1a"/>
</dbReference>
<dbReference type="GO" id="GO:0005576">
    <property type="term" value="C:extracellular region"/>
    <property type="evidence" value="ECO:0007669"/>
    <property type="project" value="UniProtKB-SubCell"/>
</dbReference>
<dbReference type="GO" id="GO:0005246">
    <property type="term" value="F:calcium channel regulator activity"/>
    <property type="evidence" value="ECO:0007669"/>
    <property type="project" value="UniProtKB-KW"/>
</dbReference>
<dbReference type="GO" id="GO:0090729">
    <property type="term" value="F:toxin activity"/>
    <property type="evidence" value="ECO:0007669"/>
    <property type="project" value="UniProtKB-KW"/>
</dbReference>
<dbReference type="InterPro" id="IPR005853">
    <property type="entry name" value="Omega-agatoxin_II/III_CS"/>
</dbReference>
<dbReference type="InterPro" id="IPR013605">
    <property type="entry name" value="Toxin_34"/>
</dbReference>
<dbReference type="Pfam" id="PF08396">
    <property type="entry name" value="Toxin_34"/>
    <property type="match status" value="1"/>
</dbReference>
<dbReference type="PROSITE" id="PS60023">
    <property type="entry name" value="OMEGA_AGA_II_III"/>
    <property type="match status" value="1"/>
</dbReference>
<evidence type="ECO:0000255" key="1"/>
<evidence type="ECO:0000269" key="2">
    <source>
    </source>
</evidence>
<evidence type="ECO:0000269" key="3">
    <source ref="2"/>
</evidence>
<evidence type="ECO:0000303" key="4">
    <source ref="2"/>
</evidence>
<evidence type="ECO:0000305" key="5"/>